<reference key="1">
    <citation type="submission" date="2007-06" db="EMBL/GenBank/DDBJ databases">
        <title>Complete sequence of Marinomonas sp. MWYL1.</title>
        <authorList>
            <consortium name="US DOE Joint Genome Institute"/>
            <person name="Copeland A."/>
            <person name="Lucas S."/>
            <person name="Lapidus A."/>
            <person name="Barry K."/>
            <person name="Glavina del Rio T."/>
            <person name="Dalin E."/>
            <person name="Tice H."/>
            <person name="Pitluck S."/>
            <person name="Kiss H."/>
            <person name="Brettin T."/>
            <person name="Bruce D."/>
            <person name="Detter J.C."/>
            <person name="Han C."/>
            <person name="Schmutz J."/>
            <person name="Larimer F."/>
            <person name="Land M."/>
            <person name="Hauser L."/>
            <person name="Kyrpides N."/>
            <person name="Kim E."/>
            <person name="Johnston A.W.B."/>
            <person name="Todd J.D."/>
            <person name="Rogers R."/>
            <person name="Wexler M."/>
            <person name="Bond P.L."/>
            <person name="Li Y."/>
            <person name="Richardson P."/>
        </authorList>
    </citation>
    <scope>NUCLEOTIDE SEQUENCE [LARGE SCALE GENOMIC DNA]</scope>
    <source>
        <strain>MWYL1</strain>
    </source>
</reference>
<organism>
    <name type="scientific">Marinomonas sp. (strain MWYL1)</name>
    <dbReference type="NCBI Taxonomy" id="400668"/>
    <lineage>
        <taxon>Bacteria</taxon>
        <taxon>Pseudomonadati</taxon>
        <taxon>Pseudomonadota</taxon>
        <taxon>Gammaproteobacteria</taxon>
        <taxon>Oceanospirillales</taxon>
        <taxon>Oceanospirillaceae</taxon>
        <taxon>Marinomonas</taxon>
    </lineage>
</organism>
<evidence type="ECO:0000255" key="1">
    <source>
        <dbReference type="PROSITE-ProRule" id="PRU01182"/>
    </source>
</evidence>
<evidence type="ECO:0000305" key="2"/>
<dbReference type="EMBL" id="CP000749">
    <property type="protein sequence ID" value="ABR69558.1"/>
    <property type="molecule type" value="Genomic_DNA"/>
</dbReference>
<dbReference type="SMR" id="A6VSX9"/>
<dbReference type="STRING" id="400668.Mmwyl1_0624"/>
<dbReference type="KEGG" id="mmw:Mmwyl1_0624"/>
<dbReference type="eggNOG" id="COG2003">
    <property type="taxonomic scope" value="Bacteria"/>
</dbReference>
<dbReference type="HOGENOM" id="CLU_073529_0_1_6"/>
<dbReference type="OrthoDB" id="9804482at2"/>
<dbReference type="GO" id="GO:0046872">
    <property type="term" value="F:metal ion binding"/>
    <property type="evidence" value="ECO:0007669"/>
    <property type="project" value="UniProtKB-KW"/>
</dbReference>
<dbReference type="GO" id="GO:0008237">
    <property type="term" value="F:metallopeptidase activity"/>
    <property type="evidence" value="ECO:0007669"/>
    <property type="project" value="UniProtKB-KW"/>
</dbReference>
<dbReference type="GO" id="GO:0006508">
    <property type="term" value="P:proteolysis"/>
    <property type="evidence" value="ECO:0007669"/>
    <property type="project" value="UniProtKB-KW"/>
</dbReference>
<dbReference type="CDD" id="cd08071">
    <property type="entry name" value="MPN_DUF2466"/>
    <property type="match status" value="1"/>
</dbReference>
<dbReference type="Gene3D" id="1.10.150.20">
    <property type="entry name" value="5' to 3' exonuclease, C-terminal subdomain"/>
    <property type="match status" value="1"/>
</dbReference>
<dbReference type="Gene3D" id="3.40.140.10">
    <property type="entry name" value="Cytidine Deaminase, domain 2"/>
    <property type="match status" value="1"/>
</dbReference>
<dbReference type="InterPro" id="IPR037518">
    <property type="entry name" value="MPN"/>
</dbReference>
<dbReference type="InterPro" id="IPR025657">
    <property type="entry name" value="RadC_JAB"/>
</dbReference>
<dbReference type="InterPro" id="IPR010994">
    <property type="entry name" value="RuvA_2-like"/>
</dbReference>
<dbReference type="InterPro" id="IPR001405">
    <property type="entry name" value="UPF0758"/>
</dbReference>
<dbReference type="InterPro" id="IPR020891">
    <property type="entry name" value="UPF0758_CS"/>
</dbReference>
<dbReference type="InterPro" id="IPR046778">
    <property type="entry name" value="UPF0758_N"/>
</dbReference>
<dbReference type="NCBIfam" id="NF000642">
    <property type="entry name" value="PRK00024.1"/>
    <property type="match status" value="1"/>
</dbReference>
<dbReference type="NCBIfam" id="TIGR00608">
    <property type="entry name" value="radc"/>
    <property type="match status" value="1"/>
</dbReference>
<dbReference type="PANTHER" id="PTHR30471">
    <property type="entry name" value="DNA REPAIR PROTEIN RADC"/>
    <property type="match status" value="1"/>
</dbReference>
<dbReference type="PANTHER" id="PTHR30471:SF3">
    <property type="entry name" value="UPF0758 PROTEIN YEES-RELATED"/>
    <property type="match status" value="1"/>
</dbReference>
<dbReference type="Pfam" id="PF04002">
    <property type="entry name" value="RadC"/>
    <property type="match status" value="1"/>
</dbReference>
<dbReference type="Pfam" id="PF20582">
    <property type="entry name" value="UPF0758_N"/>
    <property type="match status" value="1"/>
</dbReference>
<dbReference type="SUPFAM" id="SSF102712">
    <property type="entry name" value="JAB1/MPN domain"/>
    <property type="match status" value="1"/>
</dbReference>
<dbReference type="SUPFAM" id="SSF47781">
    <property type="entry name" value="RuvA domain 2-like"/>
    <property type="match status" value="1"/>
</dbReference>
<dbReference type="PROSITE" id="PS50249">
    <property type="entry name" value="MPN"/>
    <property type="match status" value="1"/>
</dbReference>
<dbReference type="PROSITE" id="PS01302">
    <property type="entry name" value="UPF0758"/>
    <property type="match status" value="1"/>
</dbReference>
<feature type="chain" id="PRO_1000074146" description="UPF0758 protein Mmwyl1_0624">
    <location>
        <begin position="1"/>
        <end position="224"/>
    </location>
</feature>
<feature type="domain" description="MPN" evidence="1">
    <location>
        <begin position="102"/>
        <end position="224"/>
    </location>
</feature>
<feature type="short sequence motif" description="JAMM motif" evidence="1">
    <location>
        <begin position="173"/>
        <end position="186"/>
    </location>
</feature>
<feature type="binding site" evidence="1">
    <location>
        <position position="173"/>
    </location>
    <ligand>
        <name>Zn(2+)</name>
        <dbReference type="ChEBI" id="CHEBI:29105"/>
        <note>catalytic</note>
    </ligand>
</feature>
<feature type="binding site" evidence="1">
    <location>
        <position position="175"/>
    </location>
    <ligand>
        <name>Zn(2+)</name>
        <dbReference type="ChEBI" id="CHEBI:29105"/>
        <note>catalytic</note>
    </ligand>
</feature>
<feature type="binding site" evidence="1">
    <location>
        <position position="186"/>
    </location>
    <ligand>
        <name>Zn(2+)</name>
        <dbReference type="ChEBI" id="CHEBI:29105"/>
        <note>catalytic</note>
    </ligand>
</feature>
<protein>
    <recommendedName>
        <fullName>UPF0758 protein Mmwyl1_0624</fullName>
    </recommendedName>
</protein>
<accession>A6VSX9</accession>
<name>Y624_MARMS</name>
<sequence>MSIKHWPEQERPREKLIQQGAGALSDSELLAIFLRTGTQGISAVELARQLLAQFGGLRSLMSASREEFCQGLGLGDAKYTQLQAVLEMSKRHLQEQLMRETVFASAEHVRTYLSSQLRHSPREVFAVLFLDTQHRLIRYQELFMGTIDAAAVYPREVVKAALQYNAAAVILAHNHPSGIAEPSQADISITDKIKRALDLVDVRLLDHFVVGDGLPVSLAERGLV</sequence>
<comment type="similarity">
    <text evidence="2">Belongs to the UPF0758 family.</text>
</comment>
<keyword id="KW-0378">Hydrolase</keyword>
<keyword id="KW-0479">Metal-binding</keyword>
<keyword id="KW-0482">Metalloprotease</keyword>
<keyword id="KW-0645">Protease</keyword>
<keyword id="KW-0862">Zinc</keyword>
<gene>
    <name type="ordered locus">Mmwyl1_0624</name>
</gene>
<proteinExistence type="inferred from homology"/>